<protein>
    <recommendedName>
        <fullName evidence="2">Cytochrome f</fullName>
    </recommendedName>
</protein>
<gene>
    <name evidence="2" type="primary">petA</name>
</gene>
<reference key="1">
    <citation type="journal article" date="2006" name="BMC Genomics">
        <title>Complete plastid genome sequence of Daucus carota: implications for biotechnology and phylogeny of angiosperms.</title>
        <authorList>
            <person name="Ruhlman T."/>
            <person name="Lee S.-B."/>
            <person name="Jansen R.K."/>
            <person name="Hostetler J.B."/>
            <person name="Tallon L.J."/>
            <person name="Town C.D."/>
            <person name="Daniell H."/>
        </authorList>
    </citation>
    <scope>NUCLEOTIDE SEQUENCE [LARGE SCALE GENOMIC DNA]</scope>
    <source>
        <strain>cv. Danvers Half-long</strain>
    </source>
</reference>
<proteinExistence type="inferred from homology"/>
<accession>Q0G9U9</accession>
<keyword id="KW-0150">Chloroplast</keyword>
<keyword id="KW-0249">Electron transport</keyword>
<keyword id="KW-0349">Heme</keyword>
<keyword id="KW-0408">Iron</keyword>
<keyword id="KW-0472">Membrane</keyword>
<keyword id="KW-0479">Metal-binding</keyword>
<keyword id="KW-0602">Photosynthesis</keyword>
<keyword id="KW-0934">Plastid</keyword>
<keyword id="KW-0732">Signal</keyword>
<keyword id="KW-0793">Thylakoid</keyword>
<keyword id="KW-0812">Transmembrane</keyword>
<keyword id="KW-1133">Transmembrane helix</keyword>
<keyword id="KW-0813">Transport</keyword>
<sequence length="320" mass="35285">MQTRKTFSWIKEQINRSISVSLMIYIITRPSISIAYPIFAQQGYENPREATGRIVCANCHLANKPVDIEVPQTVLPDTVFEAVVRIPYDMQLKQVLANGKRGTLNVGAVLILPEGFELAPADRISPEMKEKIGNLSFQSYRPNKKNILVIGPVPGQKYSEITFPILSPDPATTKEVHFLKYPIYVGGNRGRGQIYPDGSKSNNTVYNATSAGIVGKIIRKEKGGYEITIADASDGRQVVDIIPPGPELLVSEGESIKLDQPLTSNPNVGGFGQGDAEIVLQDPLRVQGLLFFLASVILAQIFLVLKKKQFEKVQLSEMNF</sequence>
<feature type="signal peptide" evidence="2">
    <location>
        <begin position="1"/>
        <end position="35"/>
    </location>
</feature>
<feature type="chain" id="PRO_0000275409" description="Cytochrome f">
    <location>
        <begin position="36"/>
        <end position="320"/>
    </location>
</feature>
<feature type="transmembrane region" description="Helical" evidence="2">
    <location>
        <begin position="286"/>
        <end position="306"/>
    </location>
</feature>
<feature type="binding site" description="axial binding residue" evidence="2">
    <location>
        <position position="36"/>
    </location>
    <ligand>
        <name>heme</name>
        <dbReference type="ChEBI" id="CHEBI:30413"/>
    </ligand>
    <ligandPart>
        <name>Fe</name>
        <dbReference type="ChEBI" id="CHEBI:18248"/>
    </ligandPart>
</feature>
<feature type="binding site" description="covalent" evidence="2">
    <location>
        <position position="56"/>
    </location>
    <ligand>
        <name>heme</name>
        <dbReference type="ChEBI" id="CHEBI:30413"/>
    </ligand>
</feature>
<feature type="binding site" description="covalent" evidence="2">
    <location>
        <position position="59"/>
    </location>
    <ligand>
        <name>heme</name>
        <dbReference type="ChEBI" id="CHEBI:30413"/>
    </ligand>
</feature>
<feature type="binding site" description="axial binding residue" evidence="2">
    <location>
        <position position="60"/>
    </location>
    <ligand>
        <name>heme</name>
        <dbReference type="ChEBI" id="CHEBI:30413"/>
    </ligand>
    <ligandPart>
        <name>Fe</name>
        <dbReference type="ChEBI" id="CHEBI:18248"/>
    </ligandPart>
</feature>
<dbReference type="EMBL" id="DQ898156">
    <property type="protein sequence ID" value="ABI32437.1"/>
    <property type="molecule type" value="Genomic_DNA"/>
</dbReference>
<dbReference type="RefSeq" id="YP_740130.1">
    <property type="nucleotide sequence ID" value="NC_008325.1"/>
</dbReference>
<dbReference type="SMR" id="Q0G9U9"/>
<dbReference type="GeneID" id="4266756"/>
<dbReference type="OMA" id="PFWAQQN"/>
<dbReference type="GO" id="GO:0009535">
    <property type="term" value="C:chloroplast thylakoid membrane"/>
    <property type="evidence" value="ECO:0007669"/>
    <property type="project" value="UniProtKB-SubCell"/>
</dbReference>
<dbReference type="GO" id="GO:0009055">
    <property type="term" value="F:electron transfer activity"/>
    <property type="evidence" value="ECO:0007669"/>
    <property type="project" value="UniProtKB-UniRule"/>
</dbReference>
<dbReference type="GO" id="GO:0020037">
    <property type="term" value="F:heme binding"/>
    <property type="evidence" value="ECO:0007669"/>
    <property type="project" value="InterPro"/>
</dbReference>
<dbReference type="GO" id="GO:0005506">
    <property type="term" value="F:iron ion binding"/>
    <property type="evidence" value="ECO:0007669"/>
    <property type="project" value="InterPro"/>
</dbReference>
<dbReference type="GO" id="GO:0015979">
    <property type="term" value="P:photosynthesis"/>
    <property type="evidence" value="ECO:0007669"/>
    <property type="project" value="UniProtKB-UniRule"/>
</dbReference>
<dbReference type="FunFam" id="1.20.5.700:FF:000001">
    <property type="entry name" value="Cytochrome f"/>
    <property type="match status" value="1"/>
</dbReference>
<dbReference type="FunFam" id="2.40.50.100:FF:000007">
    <property type="entry name" value="Cytochrome f"/>
    <property type="match status" value="1"/>
</dbReference>
<dbReference type="FunFam" id="2.60.40.830:FF:000001">
    <property type="entry name" value="Cytochrome f"/>
    <property type="match status" value="1"/>
</dbReference>
<dbReference type="Gene3D" id="2.40.50.100">
    <property type="match status" value="1"/>
</dbReference>
<dbReference type="Gene3D" id="2.60.40.830">
    <property type="entry name" value="Cytochrome f large domain"/>
    <property type="match status" value="1"/>
</dbReference>
<dbReference type="Gene3D" id="1.20.5.700">
    <property type="entry name" value="Single helix bin"/>
    <property type="match status" value="1"/>
</dbReference>
<dbReference type="HAMAP" id="MF_00610">
    <property type="entry name" value="Cytb6_f_cytF"/>
    <property type="match status" value="1"/>
</dbReference>
<dbReference type="InterPro" id="IPR024058">
    <property type="entry name" value="Cyt-f_TM"/>
</dbReference>
<dbReference type="InterPro" id="IPR002325">
    <property type="entry name" value="Cyt_f"/>
</dbReference>
<dbReference type="InterPro" id="IPR024094">
    <property type="entry name" value="Cyt_f_lg_dom"/>
</dbReference>
<dbReference type="InterPro" id="IPR036826">
    <property type="entry name" value="Cyt_f_lg_dom_sf"/>
</dbReference>
<dbReference type="InterPro" id="IPR011054">
    <property type="entry name" value="Rudment_hybrid_motif"/>
</dbReference>
<dbReference type="PANTHER" id="PTHR33288">
    <property type="match status" value="1"/>
</dbReference>
<dbReference type="PANTHER" id="PTHR33288:SF10">
    <property type="entry name" value="CYTOCHROME F"/>
    <property type="match status" value="1"/>
</dbReference>
<dbReference type="Pfam" id="PF01333">
    <property type="entry name" value="Apocytochr_F_C"/>
    <property type="match status" value="1"/>
</dbReference>
<dbReference type="Pfam" id="PF16639">
    <property type="entry name" value="Apocytochr_F_N"/>
    <property type="match status" value="1"/>
</dbReference>
<dbReference type="PRINTS" id="PR00610">
    <property type="entry name" value="CYTOCHROMEF"/>
</dbReference>
<dbReference type="SUPFAM" id="SSF103431">
    <property type="entry name" value="Cytochrome f subunit of the cytochrome b6f complex, transmembrane anchor"/>
    <property type="match status" value="1"/>
</dbReference>
<dbReference type="SUPFAM" id="SSF49441">
    <property type="entry name" value="Cytochrome f, large domain"/>
    <property type="match status" value="1"/>
</dbReference>
<dbReference type="SUPFAM" id="SSF51246">
    <property type="entry name" value="Rudiment single hybrid motif"/>
    <property type="match status" value="1"/>
</dbReference>
<dbReference type="PROSITE" id="PS51010">
    <property type="entry name" value="CYTF"/>
    <property type="match status" value="1"/>
</dbReference>
<organism>
    <name type="scientific">Daucus carota</name>
    <name type="common">Wild carrot</name>
    <dbReference type="NCBI Taxonomy" id="4039"/>
    <lineage>
        <taxon>Eukaryota</taxon>
        <taxon>Viridiplantae</taxon>
        <taxon>Streptophyta</taxon>
        <taxon>Embryophyta</taxon>
        <taxon>Tracheophyta</taxon>
        <taxon>Spermatophyta</taxon>
        <taxon>Magnoliopsida</taxon>
        <taxon>eudicotyledons</taxon>
        <taxon>Gunneridae</taxon>
        <taxon>Pentapetalae</taxon>
        <taxon>asterids</taxon>
        <taxon>campanulids</taxon>
        <taxon>Apiales</taxon>
        <taxon>Apiaceae</taxon>
        <taxon>Apioideae</taxon>
        <taxon>Scandiceae</taxon>
        <taxon>Daucinae</taxon>
        <taxon>Daucus</taxon>
        <taxon>Daucus sect. Daucus</taxon>
    </lineage>
</organism>
<comment type="function">
    <text evidence="2">Component of the cytochrome b6-f complex, which mediates electron transfer between photosystem II (PSII) and photosystem I (PSI), cyclic electron flow around PSI, and state transitions.</text>
</comment>
<comment type="cofactor">
    <cofactor evidence="2">
        <name>heme</name>
        <dbReference type="ChEBI" id="CHEBI:30413"/>
    </cofactor>
    <text evidence="2">Binds 1 heme group covalently.</text>
</comment>
<comment type="subunit">
    <text evidence="1">The 4 large subunits of the cytochrome b6-f complex are cytochrome b6, subunit IV (17 kDa polypeptide, petD), cytochrome f and the Rieske protein, while the 4 small subunits are PetG, PetL, PetM and PetN. The complex functions as a dimer (By similarity).</text>
</comment>
<comment type="subcellular location">
    <subcellularLocation>
        <location evidence="2">Plastid</location>
        <location evidence="2">Chloroplast thylakoid membrane</location>
        <topology evidence="2">Single-pass membrane protein</topology>
    </subcellularLocation>
</comment>
<comment type="similarity">
    <text evidence="2">Belongs to the cytochrome f family.</text>
</comment>
<evidence type="ECO:0000250" key="1"/>
<evidence type="ECO:0000255" key="2">
    <source>
        <dbReference type="HAMAP-Rule" id="MF_00610"/>
    </source>
</evidence>
<name>CYF_DAUCA</name>
<geneLocation type="chloroplast"/>